<feature type="chain" id="PRO_0000414266" description="U1 small nuclear ribonucleoprotein C">
    <location>
        <begin position="1"/>
        <end position="142"/>
    </location>
</feature>
<feature type="zinc finger region" description="Matrin-type" evidence="1">
    <location>
        <begin position="4"/>
        <end position="36"/>
    </location>
</feature>
<organism>
    <name type="scientific">Caenorhabditis briggsae</name>
    <dbReference type="NCBI Taxonomy" id="6238"/>
    <lineage>
        <taxon>Eukaryota</taxon>
        <taxon>Metazoa</taxon>
        <taxon>Ecdysozoa</taxon>
        <taxon>Nematoda</taxon>
        <taxon>Chromadorea</taxon>
        <taxon>Rhabditida</taxon>
        <taxon>Rhabditina</taxon>
        <taxon>Rhabditomorpha</taxon>
        <taxon>Rhabditoidea</taxon>
        <taxon>Rhabditidae</taxon>
        <taxon>Peloderinae</taxon>
        <taxon>Caenorhabditis</taxon>
    </lineage>
</organism>
<keyword id="KW-0479">Metal-binding</keyword>
<keyword id="KW-0539">Nucleus</keyword>
<keyword id="KW-1185">Reference proteome</keyword>
<keyword id="KW-0687">Ribonucleoprotein</keyword>
<keyword id="KW-0694">RNA-binding</keyword>
<keyword id="KW-0862">Zinc</keyword>
<keyword id="KW-0863">Zinc-finger</keyword>
<evidence type="ECO:0000255" key="1">
    <source>
        <dbReference type="HAMAP-Rule" id="MF_03153"/>
    </source>
</evidence>
<comment type="function">
    <text evidence="1">Component of the spliceosomal U1 snRNP, which is essential for recognition of the pre-mRNA 5' splice-site and the subsequent assembly of the spliceosome. U1-C is directly involved in initial 5' splice-site recognition for both constitutive and regulated alternative splicing. The interaction with the 5' splice-site seems to precede base-pairing between the pre-mRNA and the U1 snRNA. Stimulates commitment or early (E) complex formation by stabilizing the base pairing of the 5' end of the U1 snRNA and the 5' splice-site region.</text>
</comment>
<comment type="subunit">
    <text evidence="1">U1 snRNP is composed of the 7 core Sm proteins B/B', D1, D2, D3, E, F and G that assemble in a heptameric protein ring on the Sm site of the small nuclear RNA to form the core snRNP, and at least 3 U1 snRNP-specific proteins U1-70K, U1-A and U1-C. U1-C interacts with U1 snRNA and the 5' splice-site region of the pre-mRNA.</text>
</comment>
<comment type="subcellular location">
    <subcellularLocation>
        <location evidence="1">Nucleus</location>
    </subcellularLocation>
</comment>
<comment type="similarity">
    <text evidence="1">Belongs to the U1 small nuclear ribonucleoprotein C family.</text>
</comment>
<accession>A8XW44</accession>
<gene>
    <name type="ORF">CBG19656</name>
</gene>
<dbReference type="EMBL" id="HE600903">
    <property type="protein sequence ID" value="CAP36863.1"/>
    <property type="molecule type" value="Genomic_DNA"/>
</dbReference>
<dbReference type="RefSeq" id="XP_002634673.1">
    <property type="nucleotide sequence ID" value="XM_002634627.1"/>
</dbReference>
<dbReference type="SMR" id="A8XW44"/>
<dbReference type="FunCoup" id="A8XW44">
    <property type="interactions" value="1092"/>
</dbReference>
<dbReference type="STRING" id="6238.A8XW44"/>
<dbReference type="EnsemblMetazoa" id="CBG19656.1">
    <property type="protein sequence ID" value="CBG19656.1"/>
    <property type="gene ID" value="WBGene00038834"/>
</dbReference>
<dbReference type="GeneID" id="8576666"/>
<dbReference type="KEGG" id="cbr:CBG_19656"/>
<dbReference type="CTD" id="8576666"/>
<dbReference type="WormBase" id="CBG19656">
    <property type="protein sequence ID" value="CBP04570"/>
    <property type="gene ID" value="WBGene00038834"/>
</dbReference>
<dbReference type="eggNOG" id="KOG3454">
    <property type="taxonomic scope" value="Eukaryota"/>
</dbReference>
<dbReference type="HOGENOM" id="CLU_079697_3_1_1"/>
<dbReference type="InParanoid" id="A8XW44"/>
<dbReference type="OMA" id="MMPTGPR"/>
<dbReference type="OrthoDB" id="76567at2759"/>
<dbReference type="Proteomes" id="UP000008549">
    <property type="component" value="Unassembled WGS sequence"/>
</dbReference>
<dbReference type="GO" id="GO:0000243">
    <property type="term" value="C:commitment complex"/>
    <property type="evidence" value="ECO:0007669"/>
    <property type="project" value="UniProtKB-UniRule"/>
</dbReference>
<dbReference type="GO" id="GO:0005685">
    <property type="term" value="C:U1 snRNP"/>
    <property type="evidence" value="ECO:0000318"/>
    <property type="project" value="GO_Central"/>
</dbReference>
<dbReference type="GO" id="GO:0071004">
    <property type="term" value="C:U2-type prespliceosome"/>
    <property type="evidence" value="ECO:0007669"/>
    <property type="project" value="UniProtKB-UniRule"/>
</dbReference>
<dbReference type="GO" id="GO:0003729">
    <property type="term" value="F:mRNA binding"/>
    <property type="evidence" value="ECO:0007669"/>
    <property type="project" value="UniProtKB-UniRule"/>
</dbReference>
<dbReference type="GO" id="GO:0030627">
    <property type="term" value="F:pre-mRNA 5'-splice site binding"/>
    <property type="evidence" value="ECO:0000318"/>
    <property type="project" value="GO_Central"/>
</dbReference>
<dbReference type="GO" id="GO:0030619">
    <property type="term" value="F:U1 snRNA binding"/>
    <property type="evidence" value="ECO:0007669"/>
    <property type="project" value="UniProtKB-UniRule"/>
</dbReference>
<dbReference type="GO" id="GO:0008270">
    <property type="term" value="F:zinc ion binding"/>
    <property type="evidence" value="ECO:0007669"/>
    <property type="project" value="UniProtKB-UniRule"/>
</dbReference>
<dbReference type="GO" id="GO:0000395">
    <property type="term" value="P:mRNA 5'-splice site recognition"/>
    <property type="evidence" value="ECO:0000318"/>
    <property type="project" value="GO_Central"/>
</dbReference>
<dbReference type="GO" id="GO:0000387">
    <property type="term" value="P:spliceosomal snRNP assembly"/>
    <property type="evidence" value="ECO:0007669"/>
    <property type="project" value="UniProtKB-UniRule"/>
</dbReference>
<dbReference type="FunFam" id="3.30.160.60:FF:000059">
    <property type="entry name" value="U1 small nuclear ribonucleoprotein C"/>
    <property type="match status" value="1"/>
</dbReference>
<dbReference type="Gene3D" id="3.30.160.60">
    <property type="entry name" value="Classic Zinc Finger"/>
    <property type="match status" value="1"/>
</dbReference>
<dbReference type="HAMAP" id="MF_03153">
    <property type="entry name" value="U1_C"/>
    <property type="match status" value="1"/>
</dbReference>
<dbReference type="InterPro" id="IPR000690">
    <property type="entry name" value="Matrin/U1-C_Znf_C2H2"/>
</dbReference>
<dbReference type="InterPro" id="IPR003604">
    <property type="entry name" value="Matrin/U1-like-C_Znf_C2H2"/>
</dbReference>
<dbReference type="InterPro" id="IPR013085">
    <property type="entry name" value="U1-CZ_Znf_C2H2"/>
</dbReference>
<dbReference type="InterPro" id="IPR017340">
    <property type="entry name" value="U1_snRNP-C"/>
</dbReference>
<dbReference type="InterPro" id="IPR036236">
    <property type="entry name" value="Znf_C2H2_sf"/>
</dbReference>
<dbReference type="PANTHER" id="PTHR31148">
    <property type="entry name" value="U1 SMALL NUCLEAR RIBONUCLEOPROTEIN C"/>
    <property type="match status" value="1"/>
</dbReference>
<dbReference type="PANTHER" id="PTHR31148:SF1">
    <property type="entry name" value="U1 SMALL NUCLEAR RIBONUCLEOPROTEIN C"/>
    <property type="match status" value="1"/>
</dbReference>
<dbReference type="Pfam" id="PF06220">
    <property type="entry name" value="zf-U1"/>
    <property type="match status" value="1"/>
</dbReference>
<dbReference type="PIRSF" id="PIRSF037969">
    <property type="entry name" value="U1_snRNP-C"/>
    <property type="match status" value="1"/>
</dbReference>
<dbReference type="SMART" id="SM00451">
    <property type="entry name" value="ZnF_U1"/>
    <property type="match status" value="1"/>
</dbReference>
<dbReference type="SUPFAM" id="SSF57667">
    <property type="entry name" value="beta-beta-alpha zinc fingers"/>
    <property type="match status" value="1"/>
</dbReference>
<dbReference type="PROSITE" id="PS50171">
    <property type="entry name" value="ZF_MATRIN"/>
    <property type="match status" value="1"/>
</dbReference>
<sequence>MPKYYCDYCDTFLTHDSPSVRKTHNGGRKHKDNVRMFYQKWMEDQAQKLVDQTARAFATNRMHGAVPRTTMGMAPVPPVGHHPMMGGPPGMPMMAPRPFPGPPVGFPGAPGLAPFPGPPMGLAGPPGMPPMMPRPPQQFRPM</sequence>
<name>RU1C_CAEBR</name>
<proteinExistence type="inferred from homology"/>
<reference key="1">
    <citation type="journal article" date="2003" name="PLoS Biol.">
        <title>The genome sequence of Caenorhabditis briggsae: a platform for comparative genomics.</title>
        <authorList>
            <person name="Stein L.D."/>
            <person name="Bao Z."/>
            <person name="Blasiar D."/>
            <person name="Blumenthal T."/>
            <person name="Brent M.R."/>
            <person name="Chen N."/>
            <person name="Chinwalla A."/>
            <person name="Clarke L."/>
            <person name="Clee C."/>
            <person name="Coghlan A."/>
            <person name="Coulson A."/>
            <person name="D'Eustachio P."/>
            <person name="Fitch D.H.A."/>
            <person name="Fulton L.A."/>
            <person name="Fulton R.E."/>
            <person name="Griffiths-Jones S."/>
            <person name="Harris T.W."/>
            <person name="Hillier L.W."/>
            <person name="Kamath R."/>
            <person name="Kuwabara P.E."/>
            <person name="Mardis E.R."/>
            <person name="Marra M.A."/>
            <person name="Miner T.L."/>
            <person name="Minx P."/>
            <person name="Mullikin J.C."/>
            <person name="Plumb R.W."/>
            <person name="Rogers J."/>
            <person name="Schein J.E."/>
            <person name="Sohrmann M."/>
            <person name="Spieth J."/>
            <person name="Stajich J.E."/>
            <person name="Wei C."/>
            <person name="Willey D."/>
            <person name="Wilson R.K."/>
            <person name="Durbin R.M."/>
            <person name="Waterston R.H."/>
        </authorList>
    </citation>
    <scope>NUCLEOTIDE SEQUENCE [LARGE SCALE GENOMIC DNA]</scope>
    <source>
        <strain>AF16</strain>
    </source>
</reference>
<protein>
    <recommendedName>
        <fullName evidence="1">U1 small nuclear ribonucleoprotein C</fullName>
        <shortName evidence="1">U1 snRNP C</shortName>
        <shortName evidence="1">U1-C</shortName>
        <shortName evidence="1">U1C</shortName>
    </recommendedName>
</protein>